<sequence>MTLGSFRRGLLMLSVAFGLTRGDLAKPSKLVNCTCESPHCKRPFCQGSWCTVVLVREQGRHPQVYRGCGSLNQELCLGRPTEFLNHHCCYRSFCNHNVSLMLEATQTPSEEPEVDAHLPLILGPVLALPVLVALGALGLWRVRRRQEKQRDLHSDLGESSLILKASEQADSMLGDFLDSDCTTGSGSGLPFLVQRTVARQVALVECVGKGRYGEVWRGSWHGESVAVKIFSSRDEQSWFRETEIYNTVLLRHDNILGFIASDMTSRNSSTQLWLITHYHEHGSLYDFLQRQTLEPQLALRLAVSAACGLAHLHVEIFGTQGKPAIAHRDLKSRNVLVKSNLQCCIADLGLAVMHSQSSDYLDIGNNPRVGTKRYMAPEVLDEHIRTDCFESYKWTDIWAFGLVLWEIARRTIINGIVEDYRPPFYDMVPNDPSFEDMKKVVCVDQQTPTIPNRLAADPVLSGLAQMMRECWYPNPSARLTALRIKKTLQKLSHNPEKPKVIH</sequence>
<keyword id="KW-0037">Angiogenesis</keyword>
<keyword id="KW-0067">ATP-binding</keyword>
<keyword id="KW-1003">Cell membrane</keyword>
<keyword id="KW-1015">Disulfide bond</keyword>
<keyword id="KW-0325">Glycoprotein</keyword>
<keyword id="KW-0418">Kinase</keyword>
<keyword id="KW-0460">Magnesium</keyword>
<keyword id="KW-0464">Manganese</keyword>
<keyword id="KW-0472">Membrane</keyword>
<keyword id="KW-0479">Metal-binding</keyword>
<keyword id="KW-0547">Nucleotide-binding</keyword>
<keyword id="KW-0597">Phosphoprotein</keyword>
<keyword id="KW-0675">Receptor</keyword>
<keyword id="KW-1185">Reference proteome</keyword>
<keyword id="KW-0723">Serine/threonine-protein kinase</keyword>
<keyword id="KW-0732">Signal</keyword>
<keyword id="KW-0808">Transferase</keyword>
<keyword id="KW-0812">Transmembrane</keyword>
<keyword id="KW-1133">Transmembrane helix</keyword>
<protein>
    <recommendedName>
        <fullName evidence="7">Activin receptor type-1-like</fullName>
        <ecNumber>2.7.11.30</ecNumber>
    </recommendedName>
    <alternativeName>
        <fullName>Activin receptor-like kinase 1</fullName>
        <shortName>ALK-1</shortName>
    </alternativeName>
    <alternativeName>
        <fullName>Serine/threonine-protein kinase receptor R3</fullName>
        <shortName>SKR3</shortName>
    </alternativeName>
    <alternativeName>
        <fullName>TGF-B superfamily receptor type I</fullName>
        <shortName>TSR-I</shortName>
    </alternativeName>
</protein>
<comment type="function">
    <text evidence="2">Type I receptor for TGF-beta family ligands BMP9/GDF2 and BMP10 and important regulator of normal blood vessel development. On ligand binding, forms a receptor complex consisting of two type II and two type I transmembrane serine/threonine kinases. Type II receptors phosphorylate and activate type I receptors which autophosphorylate, then bind and activate SMAD transcriptional regulators. May bind activin as well.</text>
</comment>
<comment type="catalytic activity">
    <reaction>
        <text>L-threonyl-[receptor-protein] + ATP = O-phospho-L-threonyl-[receptor-protein] + ADP + H(+)</text>
        <dbReference type="Rhea" id="RHEA:44880"/>
        <dbReference type="Rhea" id="RHEA-COMP:11024"/>
        <dbReference type="Rhea" id="RHEA-COMP:11025"/>
        <dbReference type="ChEBI" id="CHEBI:15378"/>
        <dbReference type="ChEBI" id="CHEBI:30013"/>
        <dbReference type="ChEBI" id="CHEBI:30616"/>
        <dbReference type="ChEBI" id="CHEBI:61977"/>
        <dbReference type="ChEBI" id="CHEBI:456216"/>
        <dbReference type="EC" id="2.7.11.30"/>
    </reaction>
</comment>
<comment type="catalytic activity">
    <reaction>
        <text>L-seryl-[receptor-protein] + ATP = O-phospho-L-seryl-[receptor-protein] + ADP + H(+)</text>
        <dbReference type="Rhea" id="RHEA:18673"/>
        <dbReference type="Rhea" id="RHEA-COMP:11022"/>
        <dbReference type="Rhea" id="RHEA-COMP:11023"/>
        <dbReference type="ChEBI" id="CHEBI:15378"/>
        <dbReference type="ChEBI" id="CHEBI:29999"/>
        <dbReference type="ChEBI" id="CHEBI:30616"/>
        <dbReference type="ChEBI" id="CHEBI:83421"/>
        <dbReference type="ChEBI" id="CHEBI:456216"/>
        <dbReference type="EC" id="2.7.11.30"/>
    </reaction>
</comment>
<comment type="cofactor">
    <cofactor evidence="1">
        <name>Mg(2+)</name>
        <dbReference type="ChEBI" id="CHEBI:18420"/>
    </cofactor>
    <cofactor evidence="1">
        <name>Mn(2+)</name>
        <dbReference type="ChEBI" id="CHEBI:29035"/>
    </cofactor>
</comment>
<comment type="subunit">
    <text evidence="2">Interacts with TSC22D1/TSC-22.</text>
</comment>
<comment type="subcellular location">
    <subcellularLocation>
        <location evidence="2">Cell membrane</location>
        <topology evidence="3">Single-pass type I membrane protein</topology>
    </subcellularLocation>
</comment>
<comment type="similarity">
    <text evidence="7">Belongs to the protein kinase superfamily. TKL Ser/Thr protein kinase family. TGFB receptor subfamily.</text>
</comment>
<gene>
    <name type="primary">Acvrl1</name>
    <name type="synonym">Acvrlk1</name>
    <name type="synonym">Alk-1</name>
</gene>
<evidence type="ECO:0000250" key="1"/>
<evidence type="ECO:0000250" key="2">
    <source>
        <dbReference type="UniProtKB" id="P37023"/>
    </source>
</evidence>
<evidence type="ECO:0000255" key="3"/>
<evidence type="ECO:0000255" key="4">
    <source>
        <dbReference type="PROSITE-ProRule" id="PRU00159"/>
    </source>
</evidence>
<evidence type="ECO:0000255" key="5">
    <source>
        <dbReference type="PROSITE-ProRule" id="PRU00585"/>
    </source>
</evidence>
<evidence type="ECO:0000255" key="6">
    <source>
        <dbReference type="PROSITE-ProRule" id="PRU10027"/>
    </source>
</evidence>
<evidence type="ECO:0000305" key="7"/>
<evidence type="ECO:0007744" key="8">
    <source>
    </source>
</evidence>
<evidence type="ECO:0007744" key="9">
    <source>
    </source>
</evidence>
<accession>Q61288</accession>
<accession>Q61289</accession>
<accession>Q91YR0</accession>
<dbReference type="EC" id="2.7.11.30"/>
<dbReference type="EMBL" id="L48015">
    <property type="protein sequence ID" value="AAB03642.1"/>
    <property type="molecule type" value="mRNA"/>
</dbReference>
<dbReference type="EMBL" id="Z31664">
    <property type="protein sequence ID" value="CAA83484.1"/>
    <property type="molecule type" value="mRNA"/>
</dbReference>
<dbReference type="EMBL" id="AK160915">
    <property type="protein sequence ID" value="BAE36089.1"/>
    <property type="molecule type" value="mRNA"/>
</dbReference>
<dbReference type="EMBL" id="AK170870">
    <property type="protein sequence ID" value="BAE42083.1"/>
    <property type="molecule type" value="mRNA"/>
</dbReference>
<dbReference type="EMBL" id="CH466550">
    <property type="protein sequence ID" value="EDL04061.1"/>
    <property type="molecule type" value="Genomic_DNA"/>
</dbReference>
<dbReference type="EMBL" id="CH466550">
    <property type="protein sequence ID" value="EDL04063.1"/>
    <property type="molecule type" value="Genomic_DNA"/>
</dbReference>
<dbReference type="EMBL" id="BC015083">
    <property type="protein sequence ID" value="AAH15083.1"/>
    <property type="molecule type" value="mRNA"/>
</dbReference>
<dbReference type="CCDS" id="CCDS37215.1"/>
<dbReference type="PIR" id="I48241">
    <property type="entry name" value="I48241"/>
</dbReference>
<dbReference type="PIR" id="JC4337">
    <property type="entry name" value="JC4337"/>
</dbReference>
<dbReference type="RefSeq" id="NP_001264186.1">
    <property type="nucleotide sequence ID" value="NM_001277257.1"/>
</dbReference>
<dbReference type="RefSeq" id="NP_001264187.1">
    <property type="nucleotide sequence ID" value="NM_001277258.1"/>
</dbReference>
<dbReference type="RefSeq" id="NP_001264188.1">
    <property type="nucleotide sequence ID" value="NM_001277259.1"/>
</dbReference>
<dbReference type="RefSeq" id="NP_033742.2">
    <property type="nucleotide sequence ID" value="NM_009612.3"/>
</dbReference>
<dbReference type="SMR" id="Q61288"/>
<dbReference type="BioGRID" id="197957">
    <property type="interactions" value="89"/>
</dbReference>
<dbReference type="DIP" id="DIP-47635N"/>
<dbReference type="FunCoup" id="Q61288">
    <property type="interactions" value="387"/>
</dbReference>
<dbReference type="IntAct" id="Q61288">
    <property type="interactions" value="4"/>
</dbReference>
<dbReference type="MINT" id="Q61288"/>
<dbReference type="STRING" id="10090.ENSMUSP00000000542"/>
<dbReference type="BindingDB" id="Q61288"/>
<dbReference type="ChEMBL" id="CHEMBL4105896"/>
<dbReference type="GlyConnect" id="2704">
    <property type="glycosylation" value="1 N-Linked glycan (1 site)"/>
</dbReference>
<dbReference type="GlyCosmos" id="Q61288">
    <property type="glycosylation" value="2 sites, 1 glycan"/>
</dbReference>
<dbReference type="GlyGen" id="Q61288">
    <property type="glycosylation" value="2 sites, 2 N-linked glycans (1 site)"/>
</dbReference>
<dbReference type="iPTMnet" id="Q61288"/>
<dbReference type="PhosphoSitePlus" id="Q61288"/>
<dbReference type="jPOST" id="Q61288"/>
<dbReference type="PaxDb" id="10090-ENSMUSP00000000542"/>
<dbReference type="PeptideAtlas" id="Q61288"/>
<dbReference type="ProteomicsDB" id="281933"/>
<dbReference type="Antibodypedia" id="2055">
    <property type="antibodies" value="640 antibodies from 40 providers"/>
</dbReference>
<dbReference type="DNASU" id="11482"/>
<dbReference type="Ensembl" id="ENSMUST00000000542.14">
    <property type="protein sequence ID" value="ENSMUSP00000000542.8"/>
    <property type="gene ID" value="ENSMUSG00000000530.17"/>
</dbReference>
<dbReference type="Ensembl" id="ENSMUST00000117984.8">
    <property type="protein sequence ID" value="ENSMUSP00000113505.2"/>
    <property type="gene ID" value="ENSMUSG00000000530.17"/>
</dbReference>
<dbReference type="Ensembl" id="ENSMUST00000119063.8">
    <property type="protein sequence ID" value="ENSMUSP00000113536.2"/>
    <property type="gene ID" value="ENSMUSG00000000530.17"/>
</dbReference>
<dbReference type="Ensembl" id="ENSMUST00000120028.8">
    <property type="protein sequence ID" value="ENSMUSP00000113297.2"/>
    <property type="gene ID" value="ENSMUSG00000000530.17"/>
</dbReference>
<dbReference type="Ensembl" id="ENSMUST00000120754.2">
    <property type="protein sequence ID" value="ENSMUSP00000112490.2"/>
    <property type="gene ID" value="ENSMUSG00000000530.17"/>
</dbReference>
<dbReference type="Ensembl" id="ENSMUST00000121718.8">
    <property type="protein sequence ID" value="ENSMUSP00000114027.2"/>
    <property type="gene ID" value="ENSMUSG00000000530.17"/>
</dbReference>
<dbReference type="GeneID" id="11482"/>
<dbReference type="KEGG" id="mmu:11482"/>
<dbReference type="UCSC" id="uc007xsm.2">
    <property type="organism name" value="mouse"/>
</dbReference>
<dbReference type="AGR" id="MGI:1338946"/>
<dbReference type="CTD" id="94"/>
<dbReference type="MGI" id="MGI:1338946">
    <property type="gene designation" value="Acvrl1"/>
</dbReference>
<dbReference type="VEuPathDB" id="HostDB:ENSMUSG00000000530"/>
<dbReference type="eggNOG" id="KOG2052">
    <property type="taxonomic scope" value="Eukaryota"/>
</dbReference>
<dbReference type="GeneTree" id="ENSGT00940000161446"/>
<dbReference type="HOGENOM" id="CLU_000288_8_5_1"/>
<dbReference type="InParanoid" id="Q61288"/>
<dbReference type="OMA" id="TIHAENQ"/>
<dbReference type="OrthoDB" id="69842at2759"/>
<dbReference type="PhylomeDB" id="Q61288"/>
<dbReference type="TreeFam" id="TF314724"/>
<dbReference type="BRENDA" id="2.7.10.2">
    <property type="organism ID" value="3474"/>
</dbReference>
<dbReference type="Reactome" id="R-MMU-201451">
    <property type="pathway name" value="Signaling by BMP"/>
</dbReference>
<dbReference type="BioGRID-ORCS" id="11482">
    <property type="hits" value="4 hits in 81 CRISPR screens"/>
</dbReference>
<dbReference type="ChiTaRS" id="Acvrl1">
    <property type="organism name" value="mouse"/>
</dbReference>
<dbReference type="PRO" id="PR:Q61288"/>
<dbReference type="Proteomes" id="UP000000589">
    <property type="component" value="Chromosome 15"/>
</dbReference>
<dbReference type="RNAct" id="Q61288">
    <property type="molecule type" value="protein"/>
</dbReference>
<dbReference type="Bgee" id="ENSMUSG00000000530">
    <property type="expression patterns" value="Expressed in granulocyte and 185 other cell types or tissues"/>
</dbReference>
<dbReference type="ExpressionAtlas" id="Q61288">
    <property type="expression patterns" value="baseline and differential"/>
</dbReference>
<dbReference type="GO" id="GO:0009986">
    <property type="term" value="C:cell surface"/>
    <property type="evidence" value="ECO:0000266"/>
    <property type="project" value="MGI"/>
</dbReference>
<dbReference type="GO" id="GO:0005886">
    <property type="term" value="C:plasma membrane"/>
    <property type="evidence" value="ECO:0000250"/>
    <property type="project" value="UniProtKB"/>
</dbReference>
<dbReference type="GO" id="GO:0048185">
    <property type="term" value="F:activin binding"/>
    <property type="evidence" value="ECO:0007669"/>
    <property type="project" value="Ensembl"/>
</dbReference>
<dbReference type="GO" id="GO:0016361">
    <property type="term" value="F:activin receptor activity, type I"/>
    <property type="evidence" value="ECO:0000266"/>
    <property type="project" value="MGI"/>
</dbReference>
<dbReference type="GO" id="GO:0005524">
    <property type="term" value="F:ATP binding"/>
    <property type="evidence" value="ECO:0007669"/>
    <property type="project" value="UniProtKB-KW"/>
</dbReference>
<dbReference type="GO" id="GO:0098821">
    <property type="term" value="F:BMP receptor activity"/>
    <property type="evidence" value="ECO:0000250"/>
    <property type="project" value="UniProtKB"/>
</dbReference>
<dbReference type="GO" id="GO:0046872">
    <property type="term" value="F:metal ion binding"/>
    <property type="evidence" value="ECO:0007669"/>
    <property type="project" value="UniProtKB-KW"/>
</dbReference>
<dbReference type="GO" id="GO:0019901">
    <property type="term" value="F:protein kinase binding"/>
    <property type="evidence" value="ECO:0007669"/>
    <property type="project" value="Ensembl"/>
</dbReference>
<dbReference type="GO" id="GO:0046332">
    <property type="term" value="F:SMAD binding"/>
    <property type="evidence" value="ECO:0007669"/>
    <property type="project" value="Ensembl"/>
</dbReference>
<dbReference type="GO" id="GO:0050431">
    <property type="term" value="F:transforming growth factor beta binding"/>
    <property type="evidence" value="ECO:0007669"/>
    <property type="project" value="Ensembl"/>
</dbReference>
<dbReference type="GO" id="GO:0005024">
    <property type="term" value="F:transforming growth factor beta receptor activity"/>
    <property type="evidence" value="ECO:0000266"/>
    <property type="project" value="MGI"/>
</dbReference>
<dbReference type="GO" id="GO:0005025">
    <property type="term" value="F:transforming growth factor beta receptor activity, type I"/>
    <property type="evidence" value="ECO:0007669"/>
    <property type="project" value="Ensembl"/>
</dbReference>
<dbReference type="GO" id="GO:0001525">
    <property type="term" value="P:angiogenesis"/>
    <property type="evidence" value="ECO:0000315"/>
    <property type="project" value="MGI"/>
</dbReference>
<dbReference type="GO" id="GO:0060840">
    <property type="term" value="P:artery development"/>
    <property type="evidence" value="ECO:0000315"/>
    <property type="project" value="BHF-UCL"/>
</dbReference>
<dbReference type="GO" id="GO:0048514">
    <property type="term" value="P:blood vessel morphogenesis"/>
    <property type="evidence" value="ECO:0000315"/>
    <property type="project" value="MGI"/>
</dbReference>
<dbReference type="GO" id="GO:0001974">
    <property type="term" value="P:blood vessel remodeling"/>
    <property type="evidence" value="ECO:0000315"/>
    <property type="project" value="BHF-UCL"/>
</dbReference>
<dbReference type="GO" id="GO:0030509">
    <property type="term" value="P:BMP signaling pathway"/>
    <property type="evidence" value="ECO:0000315"/>
    <property type="project" value="MGI"/>
</dbReference>
<dbReference type="GO" id="GO:0071560">
    <property type="term" value="P:cellular response to transforming growth factor beta stimulus"/>
    <property type="evidence" value="ECO:0000314"/>
    <property type="project" value="BHF-UCL"/>
</dbReference>
<dbReference type="GO" id="GO:0035912">
    <property type="term" value="P:dorsal aorta morphogenesis"/>
    <property type="evidence" value="ECO:0000315"/>
    <property type="project" value="BHF-UCL"/>
</dbReference>
<dbReference type="GO" id="GO:0003203">
    <property type="term" value="P:endocardial cushion morphogenesis"/>
    <property type="evidence" value="ECO:0000315"/>
    <property type="project" value="BHF-UCL"/>
</dbReference>
<dbReference type="GO" id="GO:0042118">
    <property type="term" value="P:endothelial cell activation"/>
    <property type="evidence" value="ECO:0000304"/>
    <property type="project" value="DFLAT"/>
</dbReference>
<dbReference type="GO" id="GO:0061154">
    <property type="term" value="P:endothelial tube morphogenesis"/>
    <property type="evidence" value="ECO:0007669"/>
    <property type="project" value="Ensembl"/>
</dbReference>
<dbReference type="GO" id="GO:0001701">
    <property type="term" value="P:in utero embryonic development"/>
    <property type="evidence" value="ECO:0000315"/>
    <property type="project" value="MGI"/>
</dbReference>
<dbReference type="GO" id="GO:0001946">
    <property type="term" value="P:lymphangiogenesis"/>
    <property type="evidence" value="ECO:0000315"/>
    <property type="project" value="BHF-UCL"/>
</dbReference>
<dbReference type="GO" id="GO:0060836">
    <property type="term" value="P:lymphatic endothelial cell differentiation"/>
    <property type="evidence" value="ECO:0000315"/>
    <property type="project" value="BHF-UCL"/>
</dbReference>
<dbReference type="GO" id="GO:0043537">
    <property type="term" value="P:negative regulation of blood vessel endothelial cell migration"/>
    <property type="evidence" value="ECO:0007669"/>
    <property type="project" value="Ensembl"/>
</dbReference>
<dbReference type="GO" id="GO:0030308">
    <property type="term" value="P:negative regulation of cell growth"/>
    <property type="evidence" value="ECO:0007669"/>
    <property type="project" value="Ensembl"/>
</dbReference>
<dbReference type="GO" id="GO:0045602">
    <property type="term" value="P:negative regulation of endothelial cell differentiation"/>
    <property type="evidence" value="ECO:0000314"/>
    <property type="project" value="DFLAT"/>
</dbReference>
<dbReference type="GO" id="GO:0001937">
    <property type="term" value="P:negative regulation of endothelial cell proliferation"/>
    <property type="evidence" value="ECO:0000314"/>
    <property type="project" value="DFLAT"/>
</dbReference>
<dbReference type="GO" id="GO:0051895">
    <property type="term" value="P:negative regulation of focal adhesion assembly"/>
    <property type="evidence" value="ECO:0007669"/>
    <property type="project" value="Ensembl"/>
</dbReference>
<dbReference type="GO" id="GO:0010629">
    <property type="term" value="P:negative regulation of gene expression"/>
    <property type="evidence" value="ECO:0000315"/>
    <property type="project" value="BHF-UCL"/>
</dbReference>
<dbReference type="GO" id="GO:0045766">
    <property type="term" value="P:positive regulation of angiogenesis"/>
    <property type="evidence" value="ECO:0000316"/>
    <property type="project" value="MGI"/>
</dbReference>
<dbReference type="GO" id="GO:1903348">
    <property type="term" value="P:positive regulation of bicellular tight junction assembly"/>
    <property type="evidence" value="ECO:0007669"/>
    <property type="project" value="Ensembl"/>
</dbReference>
<dbReference type="GO" id="GO:0030513">
    <property type="term" value="P:positive regulation of BMP signaling pathway"/>
    <property type="evidence" value="ECO:0000314"/>
    <property type="project" value="DFLAT"/>
</dbReference>
<dbReference type="GO" id="GO:0045893">
    <property type="term" value="P:positive regulation of DNA-templated transcription"/>
    <property type="evidence" value="ECO:0000315"/>
    <property type="project" value="DFLAT"/>
</dbReference>
<dbReference type="GO" id="GO:0045603">
    <property type="term" value="P:positive regulation of endothelial cell differentiation"/>
    <property type="evidence" value="ECO:0000314"/>
    <property type="project" value="DFLAT"/>
</dbReference>
<dbReference type="GO" id="GO:0001938">
    <property type="term" value="P:positive regulation of endothelial cell proliferation"/>
    <property type="evidence" value="ECO:0000314"/>
    <property type="project" value="DFLAT"/>
</dbReference>
<dbReference type="GO" id="GO:0045747">
    <property type="term" value="P:positive regulation of Notch signaling pathway"/>
    <property type="evidence" value="ECO:0007669"/>
    <property type="project" value="Ensembl"/>
</dbReference>
<dbReference type="GO" id="GO:0060391">
    <property type="term" value="P:positive regulation of SMAD protein signal transduction"/>
    <property type="evidence" value="ECO:0007669"/>
    <property type="project" value="Ensembl"/>
</dbReference>
<dbReference type="GO" id="GO:0045944">
    <property type="term" value="P:positive regulation of transcription by RNA polymerase II"/>
    <property type="evidence" value="ECO:0000315"/>
    <property type="project" value="BHF-UCL"/>
</dbReference>
<dbReference type="GO" id="GO:0008217">
    <property type="term" value="P:regulation of blood pressure"/>
    <property type="evidence" value="ECO:0007669"/>
    <property type="project" value="Ensembl"/>
</dbReference>
<dbReference type="GO" id="GO:0061298">
    <property type="term" value="P:retina vasculature development in camera-type eye"/>
    <property type="evidence" value="ECO:0000315"/>
    <property type="project" value="BHF-UCL"/>
</dbReference>
<dbReference type="GO" id="GO:0007179">
    <property type="term" value="P:transforming growth factor beta receptor signaling pathway"/>
    <property type="evidence" value="ECO:0000314"/>
    <property type="project" value="MGI"/>
</dbReference>
<dbReference type="GO" id="GO:0060841">
    <property type="term" value="P:venous blood vessel development"/>
    <property type="evidence" value="ECO:0000315"/>
    <property type="project" value="BHF-UCL"/>
</dbReference>
<dbReference type="GO" id="GO:0035313">
    <property type="term" value="P:wound healing, spreading of epidermal cells"/>
    <property type="evidence" value="ECO:0007669"/>
    <property type="project" value="Ensembl"/>
</dbReference>
<dbReference type="CDD" id="cd14142">
    <property type="entry name" value="STKc_ACVR1_ALK1"/>
    <property type="match status" value="1"/>
</dbReference>
<dbReference type="CDD" id="cd23534">
    <property type="entry name" value="TFP_LU_ECD_ALK1"/>
    <property type="match status" value="1"/>
</dbReference>
<dbReference type="FunFam" id="1.10.510.10:FF:000018">
    <property type="entry name" value="Receptor protein serine/threonine kinase"/>
    <property type="match status" value="1"/>
</dbReference>
<dbReference type="FunFam" id="3.30.200.20:FF:000064">
    <property type="entry name" value="Receptor protein serine/threonine kinase"/>
    <property type="match status" value="1"/>
</dbReference>
<dbReference type="FunFam" id="2.10.60.10:FF:000014">
    <property type="entry name" value="Serine/threonine-protein kinase receptor R3"/>
    <property type="match status" value="1"/>
</dbReference>
<dbReference type="Gene3D" id="2.10.60.10">
    <property type="entry name" value="CD59"/>
    <property type="match status" value="1"/>
</dbReference>
<dbReference type="Gene3D" id="3.30.200.20">
    <property type="entry name" value="Phosphorylase Kinase, domain 1"/>
    <property type="match status" value="1"/>
</dbReference>
<dbReference type="Gene3D" id="1.10.510.10">
    <property type="entry name" value="Transferase(Phosphotransferase) domain 1"/>
    <property type="match status" value="1"/>
</dbReference>
<dbReference type="InterPro" id="IPR003605">
    <property type="entry name" value="GS_dom"/>
</dbReference>
<dbReference type="InterPro" id="IPR011009">
    <property type="entry name" value="Kinase-like_dom_sf"/>
</dbReference>
<dbReference type="InterPro" id="IPR000719">
    <property type="entry name" value="Prot_kinase_dom"/>
</dbReference>
<dbReference type="InterPro" id="IPR017441">
    <property type="entry name" value="Protein_kinase_ATP_BS"/>
</dbReference>
<dbReference type="InterPro" id="IPR001245">
    <property type="entry name" value="Ser-Thr/Tyr_kinase_cat_dom"/>
</dbReference>
<dbReference type="InterPro" id="IPR008271">
    <property type="entry name" value="Ser/Thr_kinase_AS"/>
</dbReference>
<dbReference type="InterPro" id="IPR045860">
    <property type="entry name" value="Snake_toxin-like_sf"/>
</dbReference>
<dbReference type="InterPro" id="IPR000333">
    <property type="entry name" value="TGFB_receptor"/>
</dbReference>
<dbReference type="PANTHER" id="PTHR23255:SF66">
    <property type="entry name" value="SERINE_THREONINE-PROTEIN KINASE RECEPTOR R3"/>
    <property type="match status" value="1"/>
</dbReference>
<dbReference type="PANTHER" id="PTHR23255">
    <property type="entry name" value="TRANSFORMING GROWTH FACTOR-BETA RECEPTOR TYPE I AND II"/>
    <property type="match status" value="1"/>
</dbReference>
<dbReference type="Pfam" id="PF07714">
    <property type="entry name" value="PK_Tyr_Ser-Thr"/>
    <property type="match status" value="1"/>
</dbReference>
<dbReference type="Pfam" id="PF08515">
    <property type="entry name" value="TGF_beta_GS"/>
    <property type="match status" value="1"/>
</dbReference>
<dbReference type="SMART" id="SM00467">
    <property type="entry name" value="GS"/>
    <property type="match status" value="1"/>
</dbReference>
<dbReference type="SMART" id="SM00220">
    <property type="entry name" value="S_TKc"/>
    <property type="match status" value="1"/>
</dbReference>
<dbReference type="SUPFAM" id="SSF56112">
    <property type="entry name" value="Protein kinase-like (PK-like)"/>
    <property type="match status" value="1"/>
</dbReference>
<dbReference type="SUPFAM" id="SSF57302">
    <property type="entry name" value="Snake toxin-like"/>
    <property type="match status" value="1"/>
</dbReference>
<dbReference type="PROSITE" id="PS51256">
    <property type="entry name" value="GS"/>
    <property type="match status" value="1"/>
</dbReference>
<dbReference type="PROSITE" id="PS00107">
    <property type="entry name" value="PROTEIN_KINASE_ATP"/>
    <property type="match status" value="1"/>
</dbReference>
<dbReference type="PROSITE" id="PS50011">
    <property type="entry name" value="PROTEIN_KINASE_DOM"/>
    <property type="match status" value="1"/>
</dbReference>
<dbReference type="PROSITE" id="PS00108">
    <property type="entry name" value="PROTEIN_KINASE_ST"/>
    <property type="match status" value="1"/>
</dbReference>
<feature type="signal peptide" evidence="3">
    <location>
        <begin position="1"/>
        <end position="22"/>
    </location>
</feature>
<feature type="chain" id="PRO_0000024421" description="Activin receptor type-1-like">
    <location>
        <begin position="23"/>
        <end position="502"/>
    </location>
</feature>
<feature type="topological domain" description="Extracellular" evidence="3">
    <location>
        <begin position="23"/>
        <end position="119"/>
    </location>
</feature>
<feature type="transmembrane region" description="Helical" evidence="3">
    <location>
        <begin position="120"/>
        <end position="140"/>
    </location>
</feature>
<feature type="topological domain" description="Cytoplasmic" evidence="3">
    <location>
        <begin position="141"/>
        <end position="502"/>
    </location>
</feature>
<feature type="domain" description="GS" evidence="5">
    <location>
        <begin position="171"/>
        <end position="200"/>
    </location>
</feature>
<feature type="domain" description="Protein kinase" evidence="4">
    <location>
        <begin position="201"/>
        <end position="502"/>
    </location>
</feature>
<feature type="region of interest" description="Mediates specificity for BMP ligand" evidence="1">
    <location>
        <begin position="72"/>
        <end position="75"/>
    </location>
</feature>
<feature type="active site" description="Proton acceptor" evidence="4 6">
    <location>
        <position position="329"/>
    </location>
</feature>
<feature type="binding site" evidence="4">
    <location>
        <begin position="207"/>
        <end position="215"/>
    </location>
    <ligand>
        <name>ATP</name>
        <dbReference type="ChEBI" id="CHEBI:30616"/>
    </ligand>
</feature>
<feature type="binding site" evidence="4">
    <location>
        <position position="228"/>
    </location>
    <ligand>
        <name>ATP</name>
        <dbReference type="ChEBI" id="CHEBI:30616"/>
    </ligand>
</feature>
<feature type="modified residue" description="Phosphoserine" evidence="8 9">
    <location>
        <position position="154"/>
    </location>
</feature>
<feature type="modified residue" description="Phosphoserine" evidence="9">
    <location>
        <position position="159"/>
    </location>
</feature>
<feature type="modified residue" description="Phosphoserine" evidence="9">
    <location>
        <position position="160"/>
    </location>
</feature>
<feature type="glycosylation site" description="N-linked (GlcNAc...) asparagine" evidence="3">
    <location>
        <position position="32"/>
    </location>
</feature>
<feature type="glycosylation site" description="N-linked (GlcNAc...) asparagine" evidence="3">
    <location>
        <position position="97"/>
    </location>
</feature>
<feature type="disulfide bond" evidence="2">
    <location>
        <begin position="33"/>
        <end position="50"/>
    </location>
</feature>
<feature type="disulfide bond" evidence="2">
    <location>
        <begin position="35"/>
        <end position="40"/>
    </location>
</feature>
<feature type="disulfide bond" evidence="2">
    <location>
        <begin position="45"/>
        <end position="68"/>
    </location>
</feature>
<feature type="disulfide bond" evidence="2">
    <location>
        <begin position="76"/>
        <end position="88"/>
    </location>
</feature>
<feature type="disulfide bond" evidence="2">
    <location>
        <begin position="89"/>
        <end position="94"/>
    </location>
</feature>
<feature type="sequence conflict" description="In Ref. 2; CAA83484." evidence="7" ref="2">
    <original>F</original>
    <variation>L</variation>
    <location>
        <position position="17"/>
    </location>
</feature>
<feature type="sequence conflict" description="In Ref. 2." evidence="7" ref="2">
    <original>R</original>
    <variation>Q</variation>
    <location>
        <position position="21"/>
    </location>
</feature>
<feature type="sequence conflict" description="In Ref. 2." evidence="7" ref="2">
    <original>D</original>
    <variation>R</variation>
    <location>
        <position position="23"/>
    </location>
</feature>
<feature type="sequence conflict" description="In Ref. 1; AAB03642." evidence="7" ref="1">
    <original>AK</original>
    <variation>RR</variation>
    <location>
        <begin position="25"/>
        <end position="26"/>
    </location>
</feature>
<feature type="sequence conflict" description="In Ref. 2; CAA83484." evidence="7" ref="2">
    <original>A</original>
    <variation>P</variation>
    <location>
        <position position="305"/>
    </location>
</feature>
<feature type="sequence conflict" description="In Ref. 2; CAA83484." evidence="7" ref="2">
    <original>SD</original>
    <variation>NE</variation>
    <location>
        <begin position="358"/>
        <end position="359"/>
    </location>
</feature>
<feature type="sequence conflict" description="In Ref. 2; CAA83484." evidence="7" ref="2">
    <original>N</original>
    <variation>T</variation>
    <location>
        <position position="366"/>
    </location>
</feature>
<name>ACVL1_MOUSE</name>
<proteinExistence type="evidence at protein level"/>
<reference key="1">
    <citation type="journal article" date="1995" name="Biochem. Biophys. Res. Commun.">
        <title>Cloning and characterization of the murine activin receptor like kinase-1 (ALK-1) homolog.</title>
        <authorList>
            <person name="Wu X."/>
            <person name="Robinson C.E."/>
            <person name="Fong H.W."/>
            <person name="Crabtree J.S."/>
            <person name="Rodriguez B.R."/>
            <person name="Roe B.A."/>
            <person name="Gimble J.M."/>
        </authorList>
    </citation>
    <scope>NUCLEOTIDE SEQUENCE [MRNA]</scope>
    <source>
        <tissue>Lung</tissue>
    </source>
</reference>
<reference key="2">
    <citation type="journal article" date="1995" name="Endocrinology">
        <title>Distinct spatial and temporal expression patterns of two type I receptors for bone morphogenetic proteins during mouse embryogenesis.</title>
        <authorList>
            <person name="Dewulf N."/>
            <person name="Verschueren K."/>
            <person name="Lonnoy O."/>
            <person name="Moren A."/>
            <person name="Grimsby S."/>
            <person name="Spiegle K."/>
            <person name="Miyazono K."/>
            <person name="Huylebroeck D."/>
            <person name="ten Dijke P."/>
        </authorList>
    </citation>
    <scope>NUCLEOTIDE SEQUENCE [MRNA]</scope>
    <source>
        <tissue>Placenta</tissue>
    </source>
</reference>
<reference key="3">
    <citation type="journal article" date="2005" name="Science">
        <title>The transcriptional landscape of the mammalian genome.</title>
        <authorList>
            <person name="Carninci P."/>
            <person name="Kasukawa T."/>
            <person name="Katayama S."/>
            <person name="Gough J."/>
            <person name="Frith M.C."/>
            <person name="Maeda N."/>
            <person name="Oyama R."/>
            <person name="Ravasi T."/>
            <person name="Lenhard B."/>
            <person name="Wells C."/>
            <person name="Kodzius R."/>
            <person name="Shimokawa K."/>
            <person name="Bajic V.B."/>
            <person name="Brenner S.E."/>
            <person name="Batalov S."/>
            <person name="Forrest A.R."/>
            <person name="Zavolan M."/>
            <person name="Davis M.J."/>
            <person name="Wilming L.G."/>
            <person name="Aidinis V."/>
            <person name="Allen J.E."/>
            <person name="Ambesi-Impiombato A."/>
            <person name="Apweiler R."/>
            <person name="Aturaliya R.N."/>
            <person name="Bailey T.L."/>
            <person name="Bansal M."/>
            <person name="Baxter L."/>
            <person name="Beisel K.W."/>
            <person name="Bersano T."/>
            <person name="Bono H."/>
            <person name="Chalk A.M."/>
            <person name="Chiu K.P."/>
            <person name="Choudhary V."/>
            <person name="Christoffels A."/>
            <person name="Clutterbuck D.R."/>
            <person name="Crowe M.L."/>
            <person name="Dalla E."/>
            <person name="Dalrymple B.P."/>
            <person name="de Bono B."/>
            <person name="Della Gatta G."/>
            <person name="di Bernardo D."/>
            <person name="Down T."/>
            <person name="Engstrom P."/>
            <person name="Fagiolini M."/>
            <person name="Faulkner G."/>
            <person name="Fletcher C.F."/>
            <person name="Fukushima T."/>
            <person name="Furuno M."/>
            <person name="Futaki S."/>
            <person name="Gariboldi M."/>
            <person name="Georgii-Hemming P."/>
            <person name="Gingeras T.R."/>
            <person name="Gojobori T."/>
            <person name="Green R.E."/>
            <person name="Gustincich S."/>
            <person name="Harbers M."/>
            <person name="Hayashi Y."/>
            <person name="Hensch T.K."/>
            <person name="Hirokawa N."/>
            <person name="Hill D."/>
            <person name="Huminiecki L."/>
            <person name="Iacono M."/>
            <person name="Ikeo K."/>
            <person name="Iwama A."/>
            <person name="Ishikawa T."/>
            <person name="Jakt M."/>
            <person name="Kanapin A."/>
            <person name="Katoh M."/>
            <person name="Kawasawa Y."/>
            <person name="Kelso J."/>
            <person name="Kitamura H."/>
            <person name="Kitano H."/>
            <person name="Kollias G."/>
            <person name="Krishnan S.P."/>
            <person name="Kruger A."/>
            <person name="Kummerfeld S.K."/>
            <person name="Kurochkin I.V."/>
            <person name="Lareau L.F."/>
            <person name="Lazarevic D."/>
            <person name="Lipovich L."/>
            <person name="Liu J."/>
            <person name="Liuni S."/>
            <person name="McWilliam S."/>
            <person name="Madan Babu M."/>
            <person name="Madera M."/>
            <person name="Marchionni L."/>
            <person name="Matsuda H."/>
            <person name="Matsuzawa S."/>
            <person name="Miki H."/>
            <person name="Mignone F."/>
            <person name="Miyake S."/>
            <person name="Morris K."/>
            <person name="Mottagui-Tabar S."/>
            <person name="Mulder N."/>
            <person name="Nakano N."/>
            <person name="Nakauchi H."/>
            <person name="Ng P."/>
            <person name="Nilsson R."/>
            <person name="Nishiguchi S."/>
            <person name="Nishikawa S."/>
            <person name="Nori F."/>
            <person name="Ohara O."/>
            <person name="Okazaki Y."/>
            <person name="Orlando V."/>
            <person name="Pang K.C."/>
            <person name="Pavan W.J."/>
            <person name="Pavesi G."/>
            <person name="Pesole G."/>
            <person name="Petrovsky N."/>
            <person name="Piazza S."/>
            <person name="Reed J."/>
            <person name="Reid J.F."/>
            <person name="Ring B.Z."/>
            <person name="Ringwald M."/>
            <person name="Rost B."/>
            <person name="Ruan Y."/>
            <person name="Salzberg S.L."/>
            <person name="Sandelin A."/>
            <person name="Schneider C."/>
            <person name="Schoenbach C."/>
            <person name="Sekiguchi K."/>
            <person name="Semple C.A."/>
            <person name="Seno S."/>
            <person name="Sessa L."/>
            <person name="Sheng Y."/>
            <person name="Shibata Y."/>
            <person name="Shimada H."/>
            <person name="Shimada K."/>
            <person name="Silva D."/>
            <person name="Sinclair B."/>
            <person name="Sperling S."/>
            <person name="Stupka E."/>
            <person name="Sugiura K."/>
            <person name="Sultana R."/>
            <person name="Takenaka Y."/>
            <person name="Taki K."/>
            <person name="Tammoja K."/>
            <person name="Tan S.L."/>
            <person name="Tang S."/>
            <person name="Taylor M.S."/>
            <person name="Tegner J."/>
            <person name="Teichmann S.A."/>
            <person name="Ueda H.R."/>
            <person name="van Nimwegen E."/>
            <person name="Verardo R."/>
            <person name="Wei C.L."/>
            <person name="Yagi K."/>
            <person name="Yamanishi H."/>
            <person name="Zabarovsky E."/>
            <person name="Zhu S."/>
            <person name="Zimmer A."/>
            <person name="Hide W."/>
            <person name="Bult C."/>
            <person name="Grimmond S.M."/>
            <person name="Teasdale R.D."/>
            <person name="Liu E.T."/>
            <person name="Brusic V."/>
            <person name="Quackenbush J."/>
            <person name="Wahlestedt C."/>
            <person name="Mattick J.S."/>
            <person name="Hume D.A."/>
            <person name="Kai C."/>
            <person name="Sasaki D."/>
            <person name="Tomaru Y."/>
            <person name="Fukuda S."/>
            <person name="Kanamori-Katayama M."/>
            <person name="Suzuki M."/>
            <person name="Aoki J."/>
            <person name="Arakawa T."/>
            <person name="Iida J."/>
            <person name="Imamura K."/>
            <person name="Itoh M."/>
            <person name="Kato T."/>
            <person name="Kawaji H."/>
            <person name="Kawagashira N."/>
            <person name="Kawashima T."/>
            <person name="Kojima M."/>
            <person name="Kondo S."/>
            <person name="Konno H."/>
            <person name="Nakano K."/>
            <person name="Ninomiya N."/>
            <person name="Nishio T."/>
            <person name="Okada M."/>
            <person name="Plessy C."/>
            <person name="Shibata K."/>
            <person name="Shiraki T."/>
            <person name="Suzuki S."/>
            <person name="Tagami M."/>
            <person name="Waki K."/>
            <person name="Watahiki A."/>
            <person name="Okamura-Oho Y."/>
            <person name="Suzuki H."/>
            <person name="Kawai J."/>
            <person name="Hayashizaki Y."/>
        </authorList>
    </citation>
    <scope>NUCLEOTIDE SEQUENCE [LARGE SCALE MRNA]</scope>
    <source>
        <strain>C57BL/6J</strain>
        <strain>NOD</strain>
    </source>
</reference>
<reference key="4">
    <citation type="submission" date="2005-09" db="EMBL/GenBank/DDBJ databases">
        <authorList>
            <person name="Mural R.J."/>
            <person name="Adams M.D."/>
            <person name="Myers E.W."/>
            <person name="Smith H.O."/>
            <person name="Venter J.C."/>
        </authorList>
    </citation>
    <scope>NUCLEOTIDE SEQUENCE [LARGE SCALE GENOMIC DNA]</scope>
</reference>
<reference key="5">
    <citation type="journal article" date="2004" name="Genome Res.">
        <title>The status, quality, and expansion of the NIH full-length cDNA project: the Mammalian Gene Collection (MGC).</title>
        <authorList>
            <consortium name="The MGC Project Team"/>
        </authorList>
    </citation>
    <scope>NUCLEOTIDE SEQUENCE [LARGE SCALE MRNA]</scope>
    <source>
        <strain>FVB/N</strain>
        <tissue>Mammary tumor</tissue>
    </source>
</reference>
<reference key="6">
    <citation type="journal article" date="2009" name="Immunity">
        <title>The phagosomal proteome in interferon-gamma-activated macrophages.</title>
        <authorList>
            <person name="Trost M."/>
            <person name="English L."/>
            <person name="Lemieux S."/>
            <person name="Courcelles M."/>
            <person name="Desjardins M."/>
            <person name="Thibault P."/>
        </authorList>
    </citation>
    <scope>PHOSPHORYLATION [LARGE SCALE ANALYSIS] AT SER-154</scope>
    <scope>IDENTIFICATION BY MASS SPECTROMETRY [LARGE SCALE ANALYSIS]</scope>
</reference>
<reference key="7">
    <citation type="journal article" date="2010" name="Cell">
        <title>A tissue-specific atlas of mouse protein phosphorylation and expression.</title>
        <authorList>
            <person name="Huttlin E.L."/>
            <person name="Jedrychowski M.P."/>
            <person name="Elias J.E."/>
            <person name="Goswami T."/>
            <person name="Rad R."/>
            <person name="Beausoleil S.A."/>
            <person name="Villen J."/>
            <person name="Haas W."/>
            <person name="Sowa M.E."/>
            <person name="Gygi S.P."/>
        </authorList>
    </citation>
    <scope>PHOSPHORYLATION [LARGE SCALE ANALYSIS] AT SER-154; SER-159 AND SER-160</scope>
    <scope>IDENTIFICATION BY MASS SPECTROMETRY [LARGE SCALE ANALYSIS]</scope>
    <source>
        <tissue>Brown adipose tissue</tissue>
        <tissue>Heart</tissue>
        <tissue>Kidney</tissue>
        <tissue>Liver</tissue>
        <tissue>Lung</tissue>
        <tissue>Spleen</tissue>
    </source>
</reference>
<organism>
    <name type="scientific">Mus musculus</name>
    <name type="common">Mouse</name>
    <dbReference type="NCBI Taxonomy" id="10090"/>
    <lineage>
        <taxon>Eukaryota</taxon>
        <taxon>Metazoa</taxon>
        <taxon>Chordata</taxon>
        <taxon>Craniata</taxon>
        <taxon>Vertebrata</taxon>
        <taxon>Euteleostomi</taxon>
        <taxon>Mammalia</taxon>
        <taxon>Eutheria</taxon>
        <taxon>Euarchontoglires</taxon>
        <taxon>Glires</taxon>
        <taxon>Rodentia</taxon>
        <taxon>Myomorpha</taxon>
        <taxon>Muroidea</taxon>
        <taxon>Muridae</taxon>
        <taxon>Murinae</taxon>
        <taxon>Mus</taxon>
        <taxon>Mus</taxon>
    </lineage>
</organism>